<gene>
    <name type="primary">ATG16</name>
    <name type="ordered locus">YALI0E22737g</name>
</gene>
<protein>
    <recommendedName>
        <fullName>Autophagy protein 16</fullName>
    </recommendedName>
</protein>
<reference key="1">
    <citation type="journal article" date="2004" name="Nature">
        <title>Genome evolution in yeasts.</title>
        <authorList>
            <person name="Dujon B."/>
            <person name="Sherman D."/>
            <person name="Fischer G."/>
            <person name="Durrens P."/>
            <person name="Casaregola S."/>
            <person name="Lafontaine I."/>
            <person name="de Montigny J."/>
            <person name="Marck C."/>
            <person name="Neuveglise C."/>
            <person name="Talla E."/>
            <person name="Goffard N."/>
            <person name="Frangeul L."/>
            <person name="Aigle M."/>
            <person name="Anthouard V."/>
            <person name="Babour A."/>
            <person name="Barbe V."/>
            <person name="Barnay S."/>
            <person name="Blanchin S."/>
            <person name="Beckerich J.-M."/>
            <person name="Beyne E."/>
            <person name="Bleykasten C."/>
            <person name="Boisrame A."/>
            <person name="Boyer J."/>
            <person name="Cattolico L."/>
            <person name="Confanioleri F."/>
            <person name="de Daruvar A."/>
            <person name="Despons L."/>
            <person name="Fabre E."/>
            <person name="Fairhead C."/>
            <person name="Ferry-Dumazet H."/>
            <person name="Groppi A."/>
            <person name="Hantraye F."/>
            <person name="Hennequin C."/>
            <person name="Jauniaux N."/>
            <person name="Joyet P."/>
            <person name="Kachouri R."/>
            <person name="Kerrest A."/>
            <person name="Koszul R."/>
            <person name="Lemaire M."/>
            <person name="Lesur I."/>
            <person name="Ma L."/>
            <person name="Muller H."/>
            <person name="Nicaud J.-M."/>
            <person name="Nikolski M."/>
            <person name="Oztas S."/>
            <person name="Ozier-Kalogeropoulos O."/>
            <person name="Pellenz S."/>
            <person name="Potier S."/>
            <person name="Richard G.-F."/>
            <person name="Straub M.-L."/>
            <person name="Suleau A."/>
            <person name="Swennen D."/>
            <person name="Tekaia F."/>
            <person name="Wesolowski-Louvel M."/>
            <person name="Westhof E."/>
            <person name="Wirth B."/>
            <person name="Zeniou-Meyer M."/>
            <person name="Zivanovic Y."/>
            <person name="Bolotin-Fukuhara M."/>
            <person name="Thierry A."/>
            <person name="Bouchier C."/>
            <person name="Caudron B."/>
            <person name="Scarpelli C."/>
            <person name="Gaillardin C."/>
            <person name="Weissenbach J."/>
            <person name="Wincker P."/>
            <person name="Souciet J.-L."/>
        </authorList>
    </citation>
    <scope>NUCLEOTIDE SEQUENCE [LARGE SCALE GENOMIC DNA]</scope>
    <source>
        <strain>CLIB 122 / E 150</strain>
    </source>
</reference>
<feature type="chain" id="PRO_0000218594" description="Autophagy protein 16">
    <location>
        <begin position="1"/>
        <end position="94"/>
    </location>
</feature>
<feature type="coiled-coil region" evidence="3">
    <location>
        <begin position="2"/>
        <end position="77"/>
    </location>
</feature>
<accession>Q6C4Y4</accession>
<evidence type="ECO:0000250" key="1"/>
<evidence type="ECO:0000250" key="2">
    <source>
        <dbReference type="UniProtKB" id="Q03818"/>
    </source>
</evidence>
<evidence type="ECO:0000255" key="3"/>
<evidence type="ECO:0000305" key="4"/>
<sequence>MQLNVTHRTNAERLEKHNRELETALAKKTEEHKEQAKALLLLQDDMLANQIQLNVLEQKTEALQQENETLVQRLVAKAAADADKMNDANAFLER</sequence>
<dbReference type="EMBL" id="CR382131">
    <property type="protein sequence ID" value="CAG79875.1"/>
    <property type="molecule type" value="Genomic_DNA"/>
</dbReference>
<dbReference type="RefSeq" id="XP_504278.1">
    <property type="nucleotide sequence ID" value="XM_504278.1"/>
</dbReference>
<dbReference type="SMR" id="Q6C4Y4"/>
<dbReference type="STRING" id="284591.Q6C4Y4"/>
<dbReference type="EnsemblFungi" id="CAG79875">
    <property type="protein sequence ID" value="CAG79875"/>
    <property type="gene ID" value="YALI0_E22737g"/>
</dbReference>
<dbReference type="KEGG" id="yli:2912907"/>
<dbReference type="VEuPathDB" id="FungiDB:YALI0_E22737g"/>
<dbReference type="HOGENOM" id="CLU_2387868_0_0_1"/>
<dbReference type="InParanoid" id="Q6C4Y4"/>
<dbReference type="OrthoDB" id="122682at4891"/>
<dbReference type="Proteomes" id="UP000001300">
    <property type="component" value="Chromosome E"/>
</dbReference>
<dbReference type="GO" id="GO:0034045">
    <property type="term" value="C:phagophore assembly site membrane"/>
    <property type="evidence" value="ECO:0007669"/>
    <property type="project" value="UniProtKB-SubCell"/>
</dbReference>
<dbReference type="GO" id="GO:0006914">
    <property type="term" value="P:autophagy"/>
    <property type="evidence" value="ECO:0007669"/>
    <property type="project" value="UniProtKB-KW"/>
</dbReference>
<dbReference type="GO" id="GO:0015031">
    <property type="term" value="P:protein transport"/>
    <property type="evidence" value="ECO:0007669"/>
    <property type="project" value="UniProtKB-KW"/>
</dbReference>
<dbReference type="Gene3D" id="1.20.5.170">
    <property type="match status" value="1"/>
</dbReference>
<dbReference type="InterPro" id="IPR013923">
    <property type="entry name" value="Autophagy-rel_prot_16_dom"/>
</dbReference>
<dbReference type="Pfam" id="PF08614">
    <property type="entry name" value="ATG16"/>
    <property type="match status" value="1"/>
</dbReference>
<name>ATG16_YARLI</name>
<comment type="function">
    <text evidence="1">Stabilizes the ATG5-ATG12 conjugate which is necessary for autophagy. The ATG5-ATG12/ATG16 complex is required for efficient promotion of ATG8-conjugation to phosphatidylethanolamine and ATG8 localization to the pre-autophagosomal structure (PAS). Also recruits ATG3 to the PAS. Involved in endoplasmic reticulum-specific autophagic process and is essential for the survival of cells subjected to severe ER stress (By similarity).</text>
</comment>
<comment type="subunit">
    <text evidence="1">Homodimer (By similarity). Part of the ATG5-ATG12/ATG16 complex. Several units of each may be present in this complex (By similarity).</text>
</comment>
<comment type="subcellular location">
    <subcellularLocation>
        <location evidence="2">Preautophagosomal structure membrane</location>
        <topology evidence="2">Peripheral membrane protein</topology>
    </subcellularLocation>
</comment>
<comment type="similarity">
    <text evidence="4">Belongs to the ATG16 family.</text>
</comment>
<keyword id="KW-0072">Autophagy</keyword>
<keyword id="KW-0175">Coiled coil</keyword>
<keyword id="KW-0472">Membrane</keyword>
<keyword id="KW-0653">Protein transport</keyword>
<keyword id="KW-1185">Reference proteome</keyword>
<keyword id="KW-0813">Transport</keyword>
<proteinExistence type="inferred from homology"/>
<organism>
    <name type="scientific">Yarrowia lipolytica (strain CLIB 122 / E 150)</name>
    <name type="common">Yeast</name>
    <name type="synonym">Candida lipolytica</name>
    <dbReference type="NCBI Taxonomy" id="284591"/>
    <lineage>
        <taxon>Eukaryota</taxon>
        <taxon>Fungi</taxon>
        <taxon>Dikarya</taxon>
        <taxon>Ascomycota</taxon>
        <taxon>Saccharomycotina</taxon>
        <taxon>Dipodascomycetes</taxon>
        <taxon>Dipodascales</taxon>
        <taxon>Dipodascales incertae sedis</taxon>
        <taxon>Yarrowia</taxon>
    </lineage>
</organism>